<reference key="1">
    <citation type="journal article" date="2005" name="Virology">
        <title>Expansion of family Reoviridae to include nine-segmented dsRNA viruses: isolation and characterization of a new virus designated Aedes pseudoscutellaris reovirus assigned to a proposed genus (Dinovernavirus).</title>
        <authorList>
            <person name="Attoui H."/>
            <person name="Mohd Jaafar F."/>
            <person name="Belhouchet M."/>
            <person name="Biagini P."/>
            <person name="Cantaloube J.F."/>
            <person name="de Micco P."/>
            <person name="de Lamballerie X."/>
        </authorList>
    </citation>
    <scope>NUCLEOTIDE SEQUENCE [GENOMIC RNA]</scope>
</reference>
<name>VP7_APRVF</name>
<gene>
    <name type="primary">S7</name>
</gene>
<organism>
    <name type="scientific">Aedes pseudoscutellaris reovirus (isolate France)</name>
    <name type="common">ApRV</name>
    <dbReference type="NCBI Taxonomy" id="648170"/>
    <lineage>
        <taxon>Viruses</taxon>
        <taxon>Riboviria</taxon>
        <taxon>Orthornavirae</taxon>
        <taxon>Duplornaviricota</taxon>
        <taxon>Resentoviricetes</taxon>
        <taxon>Reovirales</taxon>
        <taxon>Spinareoviridae</taxon>
        <taxon>Dinovernavirus</taxon>
        <taxon>Aedes pseudoscutellaris reovirus</taxon>
    </lineage>
</organism>
<protein>
    <recommendedName>
        <fullName>Uncharacterized protein VP7</fullName>
    </recommendedName>
</protein>
<evidence type="ECO:0000256" key="1">
    <source>
        <dbReference type="SAM" id="MobiDB-lite"/>
    </source>
</evidence>
<sequence length="348" mass="39440">MAFTYWDKEKRMTLKQMIQQVTINEQENELTHYVFTTPMSMPTFGKPMLGYVPLNEVATSKFFSNVNDFDRDNQLAMAHFQDTTITRAYNLTNSIKPGDTSLPDAEVAALKWFWKFFTSINLVRQPPMDNVLYWACQFLSSGTSFLPLEKDVEIVFSGFQGSHTCMFASLRQMNLSPILCPYYEHMTNFKTTAEIREYVDANEELKSLITYLCLCTIVGLCDTFVETRNMETGEYVWKVSNVVSDNHTPAQNIGKFCYTTQNAKYMIQLVHVLLFPLTDNKYADLPNYVAVITQGAINQSLPRNVVNNNEGSNSDTTTDTAPSTSGIVSGSADTVASLYPDEFKYVQS</sequence>
<organismHost>
    <name type="scientific">Aedes pseudoscutellaris</name>
    <name type="common">Mosquito</name>
    <name type="synonym">Stegomyia pseudoscutellaris</name>
    <dbReference type="NCBI Taxonomy" id="316597"/>
</organismHost>
<feature type="chain" id="PRO_0000403281" description="Uncharacterized protein VP7">
    <location>
        <begin position="1"/>
        <end position="348"/>
    </location>
</feature>
<feature type="region of interest" description="Disordered" evidence="1">
    <location>
        <begin position="303"/>
        <end position="331"/>
    </location>
</feature>
<feature type="compositionally biased region" description="Low complexity" evidence="1">
    <location>
        <begin position="312"/>
        <end position="325"/>
    </location>
</feature>
<accession>Q2Y0E4</accession>
<keyword id="KW-1185">Reference proteome</keyword>
<proteinExistence type="predicted"/>
<dbReference type="EMBL" id="DQ087282">
    <property type="protein sequence ID" value="AAZ94074.1"/>
    <property type="molecule type" value="Genomic_RNA"/>
</dbReference>
<dbReference type="RefSeq" id="YP_443941.1">
    <property type="nucleotide sequence ID" value="NC_007672.1"/>
</dbReference>
<dbReference type="SMR" id="Q2Y0E4"/>
<dbReference type="KEGG" id="vg:5076694"/>
<dbReference type="Proteomes" id="UP000001676">
    <property type="component" value="Genome"/>
</dbReference>
<dbReference type="InterPro" id="IPR057040">
    <property type="entry name" value="FAKV_Clamp"/>
</dbReference>
<dbReference type="Pfam" id="PF24159">
    <property type="entry name" value="FAKV_Clamp"/>
    <property type="match status" value="1"/>
</dbReference>